<keyword id="KW-0056">Arginine metabolism</keyword>
<keyword id="KW-0520">NAD</keyword>
<keyword id="KW-0560">Oxidoreductase</keyword>
<name>ASTD_SALDC</name>
<dbReference type="EC" id="1.2.1.71" evidence="1"/>
<dbReference type="EMBL" id="CP001144">
    <property type="protein sequence ID" value="ACH76775.1"/>
    <property type="molecule type" value="Genomic_DNA"/>
</dbReference>
<dbReference type="RefSeq" id="WP_000177259.1">
    <property type="nucleotide sequence ID" value="NC_011205.1"/>
</dbReference>
<dbReference type="SMR" id="B5FJD6"/>
<dbReference type="KEGG" id="sed:SeD_A2041"/>
<dbReference type="HOGENOM" id="CLU_005391_1_0_6"/>
<dbReference type="UniPathway" id="UPA00185">
    <property type="reaction ID" value="UER00282"/>
</dbReference>
<dbReference type="Proteomes" id="UP000008322">
    <property type="component" value="Chromosome"/>
</dbReference>
<dbReference type="GO" id="GO:0043824">
    <property type="term" value="F:succinylglutamate-semialdehyde dehydrogenase activity"/>
    <property type="evidence" value="ECO:0007669"/>
    <property type="project" value="UniProtKB-EC"/>
</dbReference>
<dbReference type="GO" id="GO:0019544">
    <property type="term" value="P:arginine catabolic process to glutamate"/>
    <property type="evidence" value="ECO:0007669"/>
    <property type="project" value="UniProtKB-UniRule"/>
</dbReference>
<dbReference type="GO" id="GO:0019545">
    <property type="term" value="P:arginine catabolic process to succinate"/>
    <property type="evidence" value="ECO:0007669"/>
    <property type="project" value="UniProtKB-UniRule"/>
</dbReference>
<dbReference type="CDD" id="cd07095">
    <property type="entry name" value="ALDH_SGSD_AstD"/>
    <property type="match status" value="1"/>
</dbReference>
<dbReference type="FunFam" id="3.40.309.10:FF:000013">
    <property type="entry name" value="N-succinylglutamate 5-semialdehyde dehydrogenase"/>
    <property type="match status" value="1"/>
</dbReference>
<dbReference type="FunFam" id="3.40.605.10:FF:000010">
    <property type="entry name" value="N-succinylglutamate 5-semialdehyde dehydrogenase"/>
    <property type="match status" value="1"/>
</dbReference>
<dbReference type="Gene3D" id="3.40.605.10">
    <property type="entry name" value="Aldehyde Dehydrogenase, Chain A, domain 1"/>
    <property type="match status" value="1"/>
</dbReference>
<dbReference type="Gene3D" id="3.40.309.10">
    <property type="entry name" value="Aldehyde Dehydrogenase, Chain A, domain 2"/>
    <property type="match status" value="1"/>
</dbReference>
<dbReference type="HAMAP" id="MF_01174">
    <property type="entry name" value="Aldedh_AstD"/>
    <property type="match status" value="1"/>
</dbReference>
<dbReference type="InterPro" id="IPR016161">
    <property type="entry name" value="Ald_DH/histidinol_DH"/>
</dbReference>
<dbReference type="InterPro" id="IPR016163">
    <property type="entry name" value="Ald_DH_C"/>
</dbReference>
<dbReference type="InterPro" id="IPR016160">
    <property type="entry name" value="Ald_DH_CS_CYS"/>
</dbReference>
<dbReference type="InterPro" id="IPR029510">
    <property type="entry name" value="Ald_DH_CS_GLU"/>
</dbReference>
<dbReference type="InterPro" id="IPR016162">
    <property type="entry name" value="Ald_DH_N"/>
</dbReference>
<dbReference type="InterPro" id="IPR015590">
    <property type="entry name" value="Aldehyde_DH_dom"/>
</dbReference>
<dbReference type="InterPro" id="IPR017649">
    <property type="entry name" value="SuccinylGlu_semiald_DH_AstD"/>
</dbReference>
<dbReference type="NCBIfam" id="TIGR03240">
    <property type="entry name" value="arg_catab_astD"/>
    <property type="match status" value="1"/>
</dbReference>
<dbReference type="NCBIfam" id="NF006992">
    <property type="entry name" value="PRK09457.1"/>
    <property type="match status" value="1"/>
</dbReference>
<dbReference type="PANTHER" id="PTHR11699">
    <property type="entry name" value="ALDEHYDE DEHYDROGENASE-RELATED"/>
    <property type="match status" value="1"/>
</dbReference>
<dbReference type="Pfam" id="PF00171">
    <property type="entry name" value="Aldedh"/>
    <property type="match status" value="1"/>
</dbReference>
<dbReference type="SUPFAM" id="SSF53720">
    <property type="entry name" value="ALDH-like"/>
    <property type="match status" value="1"/>
</dbReference>
<dbReference type="PROSITE" id="PS00070">
    <property type="entry name" value="ALDEHYDE_DEHYDR_CYS"/>
    <property type="match status" value="1"/>
</dbReference>
<dbReference type="PROSITE" id="PS00687">
    <property type="entry name" value="ALDEHYDE_DEHYDR_GLU"/>
    <property type="match status" value="1"/>
</dbReference>
<proteinExistence type="inferred from homology"/>
<gene>
    <name evidence="1" type="primary">astD</name>
    <name type="ordered locus">SeD_A2041</name>
</gene>
<protein>
    <recommendedName>
        <fullName evidence="1">N-succinylglutamate 5-semialdehyde dehydrogenase</fullName>
        <ecNumber evidence="1">1.2.1.71</ecNumber>
    </recommendedName>
    <alternativeName>
        <fullName evidence="1">Succinylglutamic semialdehyde dehydrogenase</fullName>
        <shortName evidence="1">SGSD</shortName>
    </alternativeName>
</protein>
<sequence>MTLWINGDWITGQGERRRKTNPVSAEIIWQGNDANAAQVAEACQAARAAFPRWARQPFAARQAIVEKFAALLEAHKAELTEVIARETGKPRWEAATEVTAMINKIAISIKAYHARTGEQKSELVDGAATLRHRPHGVLAVFGPYNFPGHLPNGHIVPALLAGNTLIFKPSELTPWTGETVIKLWERAGLPAGVLNLVQGGRETGQALSSLDDLDGLLFTGSASTGYQLHRQLSGQPEKILALEMGGNNPLIIEDVANIDAAVHLTLQSAFITAGQRCTCARRLLVKQGAQGDAFLARLVDVAGRLQPGRWDDDPQPFIGGLISAQAAQHVMEAWRQREALGGRTLLAPRKVKEGTSLLTPGIIELTGVADVPDEEVFGPLLNVWRYAHFDEAIRLANNTRFGLSCGLVSTDRAQFEQLLLEARAGIVNWNKPLTGAASTAPFGGVGASGNHRPSAWYAADYCAWPMVSLESPELTLPATLSPGLDFSRREAV</sequence>
<evidence type="ECO:0000255" key="1">
    <source>
        <dbReference type="HAMAP-Rule" id="MF_01174"/>
    </source>
</evidence>
<feature type="chain" id="PRO_1000138054" description="N-succinylglutamate 5-semialdehyde dehydrogenase">
    <location>
        <begin position="1"/>
        <end position="492"/>
    </location>
</feature>
<feature type="active site" evidence="1">
    <location>
        <position position="243"/>
    </location>
</feature>
<feature type="active site" evidence="1">
    <location>
        <position position="277"/>
    </location>
</feature>
<feature type="binding site" evidence="1">
    <location>
        <begin position="220"/>
        <end position="225"/>
    </location>
    <ligand>
        <name>NAD(+)</name>
        <dbReference type="ChEBI" id="CHEBI:57540"/>
    </ligand>
</feature>
<accession>B5FJD6</accession>
<organism>
    <name type="scientific">Salmonella dublin (strain CT_02021853)</name>
    <dbReference type="NCBI Taxonomy" id="439851"/>
    <lineage>
        <taxon>Bacteria</taxon>
        <taxon>Pseudomonadati</taxon>
        <taxon>Pseudomonadota</taxon>
        <taxon>Gammaproteobacteria</taxon>
        <taxon>Enterobacterales</taxon>
        <taxon>Enterobacteriaceae</taxon>
        <taxon>Salmonella</taxon>
    </lineage>
</organism>
<reference key="1">
    <citation type="journal article" date="2011" name="J. Bacteriol.">
        <title>Comparative genomics of 28 Salmonella enterica isolates: evidence for CRISPR-mediated adaptive sublineage evolution.</title>
        <authorList>
            <person name="Fricke W.F."/>
            <person name="Mammel M.K."/>
            <person name="McDermott P.F."/>
            <person name="Tartera C."/>
            <person name="White D.G."/>
            <person name="Leclerc J.E."/>
            <person name="Ravel J."/>
            <person name="Cebula T.A."/>
        </authorList>
    </citation>
    <scope>NUCLEOTIDE SEQUENCE [LARGE SCALE GENOMIC DNA]</scope>
    <source>
        <strain>CT_02021853</strain>
    </source>
</reference>
<comment type="function">
    <text evidence="1">Catalyzes the NAD-dependent reduction of succinylglutamate semialdehyde into succinylglutamate.</text>
</comment>
<comment type="catalytic activity">
    <reaction evidence="1">
        <text>N-succinyl-L-glutamate 5-semialdehyde + NAD(+) + H2O = N-succinyl-L-glutamate + NADH + 2 H(+)</text>
        <dbReference type="Rhea" id="RHEA:10812"/>
        <dbReference type="ChEBI" id="CHEBI:15377"/>
        <dbReference type="ChEBI" id="CHEBI:15378"/>
        <dbReference type="ChEBI" id="CHEBI:57540"/>
        <dbReference type="ChEBI" id="CHEBI:57945"/>
        <dbReference type="ChEBI" id="CHEBI:58520"/>
        <dbReference type="ChEBI" id="CHEBI:58763"/>
        <dbReference type="EC" id="1.2.1.71"/>
    </reaction>
</comment>
<comment type="pathway">
    <text evidence="1">Amino-acid degradation; L-arginine degradation via AST pathway; L-glutamate and succinate from L-arginine: step 4/5.</text>
</comment>
<comment type="similarity">
    <text evidence="1">Belongs to the aldehyde dehydrogenase family. AstD subfamily.</text>
</comment>